<name>ANKR7_MOUSE</name>
<proteinExistence type="evidence at transcript level"/>
<dbReference type="EMBL" id="AK015948">
    <property type="protein sequence ID" value="BAB30047.1"/>
    <property type="molecule type" value="mRNA"/>
</dbReference>
<dbReference type="EMBL" id="AK077080">
    <property type="protein sequence ID" value="BAC36600.1"/>
    <property type="molecule type" value="mRNA"/>
</dbReference>
<dbReference type="EMBL" id="BC049731">
    <property type="protein sequence ID" value="AAH49731.1"/>
    <property type="molecule type" value="mRNA"/>
</dbReference>
<dbReference type="CCDS" id="CCDS19933.1"/>
<dbReference type="RefSeq" id="NP_001161229.1">
    <property type="nucleotide sequence ID" value="NM_001167757.1"/>
</dbReference>
<dbReference type="RefSeq" id="NP_083478.2">
    <property type="nucleotide sequence ID" value="NM_029202.2"/>
</dbReference>
<dbReference type="SMR" id="Q9D504"/>
<dbReference type="BioGRID" id="217294">
    <property type="interactions" value="2"/>
</dbReference>
<dbReference type="FunCoup" id="Q9D504">
    <property type="interactions" value="50"/>
</dbReference>
<dbReference type="IntAct" id="Q9D504">
    <property type="interactions" value="2"/>
</dbReference>
<dbReference type="iPTMnet" id="Q9D504"/>
<dbReference type="PhosphoSitePlus" id="Q9D504"/>
<dbReference type="ProteomicsDB" id="296246"/>
<dbReference type="DNASU" id="75196"/>
<dbReference type="Ensembl" id="ENSMUST00000031489.10">
    <property type="protein sequence ID" value="ENSMUSP00000031489.7"/>
    <property type="gene ID" value="ENSMUSG00000029517.14"/>
</dbReference>
<dbReference type="GeneID" id="75196"/>
<dbReference type="KEGG" id="mmu:75196"/>
<dbReference type="UCSC" id="uc009bap.1">
    <property type="organism name" value="mouse"/>
</dbReference>
<dbReference type="AGR" id="MGI:1922446"/>
<dbReference type="CTD" id="56311"/>
<dbReference type="MGI" id="MGI:1922446">
    <property type="gene designation" value="Ankrd7"/>
</dbReference>
<dbReference type="VEuPathDB" id="HostDB:ENSMUSG00000029517"/>
<dbReference type="eggNOG" id="KOG0504">
    <property type="taxonomic scope" value="Eukaryota"/>
</dbReference>
<dbReference type="GeneTree" id="ENSGT00940000161777"/>
<dbReference type="InParanoid" id="Q9D504"/>
<dbReference type="OrthoDB" id="366390at2759"/>
<dbReference type="PhylomeDB" id="Q9D504"/>
<dbReference type="TreeFam" id="TF337879"/>
<dbReference type="BioGRID-ORCS" id="75196">
    <property type="hits" value="2 hits in 77 CRISPR screens"/>
</dbReference>
<dbReference type="ChiTaRS" id="Ankrd7">
    <property type="organism name" value="mouse"/>
</dbReference>
<dbReference type="PRO" id="PR:Q9D504"/>
<dbReference type="Proteomes" id="UP000000589">
    <property type="component" value="Chromosome 6"/>
</dbReference>
<dbReference type="RNAct" id="Q9D504">
    <property type="molecule type" value="protein"/>
</dbReference>
<dbReference type="Bgee" id="ENSMUSG00000029517">
    <property type="expression patterns" value="Expressed in spermatid and 4 other cell types or tissues"/>
</dbReference>
<dbReference type="ExpressionAtlas" id="Q9D504">
    <property type="expression patterns" value="baseline and differential"/>
</dbReference>
<dbReference type="GO" id="GO:0005634">
    <property type="term" value="C:nucleus"/>
    <property type="evidence" value="ECO:0000314"/>
    <property type="project" value="MGI"/>
</dbReference>
<dbReference type="GO" id="GO:0001835">
    <property type="term" value="P:blastocyst hatching"/>
    <property type="evidence" value="ECO:0000315"/>
    <property type="project" value="MGI"/>
</dbReference>
<dbReference type="FunFam" id="1.25.40.20:FF:000208">
    <property type="entry name" value="Ankyrin repeat domain-containing protein 26"/>
    <property type="match status" value="1"/>
</dbReference>
<dbReference type="Gene3D" id="1.25.40.20">
    <property type="entry name" value="Ankyrin repeat-containing domain"/>
    <property type="match status" value="2"/>
</dbReference>
<dbReference type="InterPro" id="IPR050657">
    <property type="entry name" value="Ankyrin_repeat_domain"/>
</dbReference>
<dbReference type="InterPro" id="IPR002110">
    <property type="entry name" value="Ankyrin_rpt"/>
</dbReference>
<dbReference type="InterPro" id="IPR036770">
    <property type="entry name" value="Ankyrin_rpt-contain_sf"/>
</dbReference>
<dbReference type="PANTHER" id="PTHR24147">
    <property type="entry name" value="ANKYRIN REPEAT DOMAIN 36-RELATED"/>
    <property type="match status" value="1"/>
</dbReference>
<dbReference type="PANTHER" id="PTHR24147:SF62">
    <property type="entry name" value="ANKYRIN REPEAT DOMAIN-CONTAINING PROTEIN 7"/>
    <property type="match status" value="1"/>
</dbReference>
<dbReference type="Pfam" id="PF00023">
    <property type="entry name" value="Ank"/>
    <property type="match status" value="2"/>
</dbReference>
<dbReference type="Pfam" id="PF12796">
    <property type="entry name" value="Ank_2"/>
    <property type="match status" value="1"/>
</dbReference>
<dbReference type="PRINTS" id="PR01415">
    <property type="entry name" value="ANKYRIN"/>
</dbReference>
<dbReference type="SMART" id="SM00248">
    <property type="entry name" value="ANK"/>
    <property type="match status" value="5"/>
</dbReference>
<dbReference type="SUPFAM" id="SSF48403">
    <property type="entry name" value="Ankyrin repeat"/>
    <property type="match status" value="1"/>
</dbReference>
<dbReference type="PROSITE" id="PS50297">
    <property type="entry name" value="ANK_REP_REGION"/>
    <property type="match status" value="1"/>
</dbReference>
<dbReference type="PROSITE" id="PS50088">
    <property type="entry name" value="ANK_REPEAT"/>
    <property type="match status" value="4"/>
</dbReference>
<accession>Q9D504</accession>
<accession>Q810N2</accession>
<accession>Q8BVP4</accession>
<reference key="1">
    <citation type="journal article" date="2005" name="Science">
        <title>The transcriptional landscape of the mammalian genome.</title>
        <authorList>
            <person name="Carninci P."/>
            <person name="Kasukawa T."/>
            <person name="Katayama S."/>
            <person name="Gough J."/>
            <person name="Frith M.C."/>
            <person name="Maeda N."/>
            <person name="Oyama R."/>
            <person name="Ravasi T."/>
            <person name="Lenhard B."/>
            <person name="Wells C."/>
            <person name="Kodzius R."/>
            <person name="Shimokawa K."/>
            <person name="Bajic V.B."/>
            <person name="Brenner S.E."/>
            <person name="Batalov S."/>
            <person name="Forrest A.R."/>
            <person name="Zavolan M."/>
            <person name="Davis M.J."/>
            <person name="Wilming L.G."/>
            <person name="Aidinis V."/>
            <person name="Allen J.E."/>
            <person name="Ambesi-Impiombato A."/>
            <person name="Apweiler R."/>
            <person name="Aturaliya R.N."/>
            <person name="Bailey T.L."/>
            <person name="Bansal M."/>
            <person name="Baxter L."/>
            <person name="Beisel K.W."/>
            <person name="Bersano T."/>
            <person name="Bono H."/>
            <person name="Chalk A.M."/>
            <person name="Chiu K.P."/>
            <person name="Choudhary V."/>
            <person name="Christoffels A."/>
            <person name="Clutterbuck D.R."/>
            <person name="Crowe M.L."/>
            <person name="Dalla E."/>
            <person name="Dalrymple B.P."/>
            <person name="de Bono B."/>
            <person name="Della Gatta G."/>
            <person name="di Bernardo D."/>
            <person name="Down T."/>
            <person name="Engstrom P."/>
            <person name="Fagiolini M."/>
            <person name="Faulkner G."/>
            <person name="Fletcher C.F."/>
            <person name="Fukushima T."/>
            <person name="Furuno M."/>
            <person name="Futaki S."/>
            <person name="Gariboldi M."/>
            <person name="Georgii-Hemming P."/>
            <person name="Gingeras T.R."/>
            <person name="Gojobori T."/>
            <person name="Green R.E."/>
            <person name="Gustincich S."/>
            <person name="Harbers M."/>
            <person name="Hayashi Y."/>
            <person name="Hensch T.K."/>
            <person name="Hirokawa N."/>
            <person name="Hill D."/>
            <person name="Huminiecki L."/>
            <person name="Iacono M."/>
            <person name="Ikeo K."/>
            <person name="Iwama A."/>
            <person name="Ishikawa T."/>
            <person name="Jakt M."/>
            <person name="Kanapin A."/>
            <person name="Katoh M."/>
            <person name="Kawasawa Y."/>
            <person name="Kelso J."/>
            <person name="Kitamura H."/>
            <person name="Kitano H."/>
            <person name="Kollias G."/>
            <person name="Krishnan S.P."/>
            <person name="Kruger A."/>
            <person name="Kummerfeld S.K."/>
            <person name="Kurochkin I.V."/>
            <person name="Lareau L.F."/>
            <person name="Lazarevic D."/>
            <person name="Lipovich L."/>
            <person name="Liu J."/>
            <person name="Liuni S."/>
            <person name="McWilliam S."/>
            <person name="Madan Babu M."/>
            <person name="Madera M."/>
            <person name="Marchionni L."/>
            <person name="Matsuda H."/>
            <person name="Matsuzawa S."/>
            <person name="Miki H."/>
            <person name="Mignone F."/>
            <person name="Miyake S."/>
            <person name="Morris K."/>
            <person name="Mottagui-Tabar S."/>
            <person name="Mulder N."/>
            <person name="Nakano N."/>
            <person name="Nakauchi H."/>
            <person name="Ng P."/>
            <person name="Nilsson R."/>
            <person name="Nishiguchi S."/>
            <person name="Nishikawa S."/>
            <person name="Nori F."/>
            <person name="Ohara O."/>
            <person name="Okazaki Y."/>
            <person name="Orlando V."/>
            <person name="Pang K.C."/>
            <person name="Pavan W.J."/>
            <person name="Pavesi G."/>
            <person name="Pesole G."/>
            <person name="Petrovsky N."/>
            <person name="Piazza S."/>
            <person name="Reed J."/>
            <person name="Reid J.F."/>
            <person name="Ring B.Z."/>
            <person name="Ringwald M."/>
            <person name="Rost B."/>
            <person name="Ruan Y."/>
            <person name="Salzberg S.L."/>
            <person name="Sandelin A."/>
            <person name="Schneider C."/>
            <person name="Schoenbach C."/>
            <person name="Sekiguchi K."/>
            <person name="Semple C.A."/>
            <person name="Seno S."/>
            <person name="Sessa L."/>
            <person name="Sheng Y."/>
            <person name="Shibata Y."/>
            <person name="Shimada H."/>
            <person name="Shimada K."/>
            <person name="Silva D."/>
            <person name="Sinclair B."/>
            <person name="Sperling S."/>
            <person name="Stupka E."/>
            <person name="Sugiura K."/>
            <person name="Sultana R."/>
            <person name="Takenaka Y."/>
            <person name="Taki K."/>
            <person name="Tammoja K."/>
            <person name="Tan S.L."/>
            <person name="Tang S."/>
            <person name="Taylor M.S."/>
            <person name="Tegner J."/>
            <person name="Teichmann S.A."/>
            <person name="Ueda H.R."/>
            <person name="van Nimwegen E."/>
            <person name="Verardo R."/>
            <person name="Wei C.L."/>
            <person name="Yagi K."/>
            <person name="Yamanishi H."/>
            <person name="Zabarovsky E."/>
            <person name="Zhu S."/>
            <person name="Zimmer A."/>
            <person name="Hide W."/>
            <person name="Bult C."/>
            <person name="Grimmond S.M."/>
            <person name="Teasdale R.D."/>
            <person name="Liu E.T."/>
            <person name="Brusic V."/>
            <person name="Quackenbush J."/>
            <person name="Wahlestedt C."/>
            <person name="Mattick J.S."/>
            <person name="Hume D.A."/>
            <person name="Kai C."/>
            <person name="Sasaki D."/>
            <person name="Tomaru Y."/>
            <person name="Fukuda S."/>
            <person name="Kanamori-Katayama M."/>
            <person name="Suzuki M."/>
            <person name="Aoki J."/>
            <person name="Arakawa T."/>
            <person name="Iida J."/>
            <person name="Imamura K."/>
            <person name="Itoh M."/>
            <person name="Kato T."/>
            <person name="Kawaji H."/>
            <person name="Kawagashira N."/>
            <person name="Kawashima T."/>
            <person name="Kojima M."/>
            <person name="Kondo S."/>
            <person name="Konno H."/>
            <person name="Nakano K."/>
            <person name="Ninomiya N."/>
            <person name="Nishio T."/>
            <person name="Okada M."/>
            <person name="Plessy C."/>
            <person name="Shibata K."/>
            <person name="Shiraki T."/>
            <person name="Suzuki S."/>
            <person name="Tagami M."/>
            <person name="Waki K."/>
            <person name="Watahiki A."/>
            <person name="Okamura-Oho Y."/>
            <person name="Suzuki H."/>
            <person name="Kawai J."/>
            <person name="Hayashizaki Y."/>
        </authorList>
    </citation>
    <scope>NUCLEOTIDE SEQUENCE [LARGE SCALE MRNA]</scope>
    <source>
        <strain>C57BL/6J</strain>
        <tissue>Testis</tissue>
    </source>
</reference>
<reference key="2">
    <citation type="journal article" date="2004" name="Genome Res.">
        <title>The status, quality, and expansion of the NIH full-length cDNA project: the Mammalian Gene Collection (MGC).</title>
        <authorList>
            <consortium name="The MGC Project Team"/>
        </authorList>
    </citation>
    <scope>NUCLEOTIDE SEQUENCE [LARGE SCALE MRNA]</scope>
    <source>
        <strain>C57BL/6J</strain>
        <tissue>Testis</tissue>
    </source>
</reference>
<feature type="chain" id="PRO_0000320067" description="Ankyrin repeat domain-containing protein 7">
    <location>
        <begin position="1"/>
        <end position="279"/>
    </location>
</feature>
<feature type="repeat" description="ANK 1">
    <location>
        <begin position="80"/>
        <end position="109"/>
    </location>
</feature>
<feature type="repeat" description="ANK 2">
    <location>
        <begin position="113"/>
        <end position="142"/>
    </location>
</feature>
<feature type="repeat" description="ANK 3">
    <location>
        <begin position="146"/>
        <end position="175"/>
    </location>
</feature>
<feature type="repeat" description="ANK 4">
    <location>
        <begin position="179"/>
        <end position="208"/>
    </location>
</feature>
<feature type="repeat" description="ANK 5">
    <location>
        <begin position="212"/>
        <end position="241"/>
    </location>
</feature>
<feature type="region of interest" description="Disordered" evidence="1">
    <location>
        <begin position="1"/>
        <end position="25"/>
    </location>
</feature>
<feature type="compositionally biased region" description="Basic residues" evidence="1">
    <location>
        <begin position="1"/>
        <end position="11"/>
    </location>
</feature>
<feature type="sequence conflict" description="In Ref. 1; BAB30047." evidence="2" ref="1">
    <original>S</original>
    <variation>N</variation>
    <location>
        <position position="34"/>
    </location>
</feature>
<feature type="sequence conflict" description="In Ref. 1; BAB30047." evidence="2" ref="1">
    <original>H</original>
    <variation>R</variation>
    <location>
        <position position="42"/>
    </location>
</feature>
<feature type="sequence conflict" description="In Ref. 2; AAH49731." evidence="2" ref="2">
    <original>D</original>
    <variation>G</variation>
    <location>
        <position position="78"/>
    </location>
</feature>
<feature type="sequence conflict" description="In Ref. 1; BAC36600." evidence="2" ref="1">
    <original>K</original>
    <variation>KQ</variation>
    <location>
        <position position="120"/>
    </location>
</feature>
<keyword id="KW-0040">ANK repeat</keyword>
<keyword id="KW-1185">Reference proteome</keyword>
<keyword id="KW-0677">Repeat</keyword>
<gene>
    <name type="primary">Ankrd7</name>
</gene>
<evidence type="ECO:0000256" key="1">
    <source>
        <dbReference type="SAM" id="MobiDB-lite"/>
    </source>
</evidence>
<evidence type="ECO:0000305" key="2"/>
<protein>
    <recommendedName>
        <fullName>Ankyrin repeat domain-containing protein 7</fullName>
    </recommendedName>
</protein>
<organism>
    <name type="scientific">Mus musculus</name>
    <name type="common">Mouse</name>
    <dbReference type="NCBI Taxonomy" id="10090"/>
    <lineage>
        <taxon>Eukaryota</taxon>
        <taxon>Metazoa</taxon>
        <taxon>Chordata</taxon>
        <taxon>Craniata</taxon>
        <taxon>Vertebrata</taxon>
        <taxon>Euteleostomi</taxon>
        <taxon>Mammalia</taxon>
        <taxon>Eutheria</taxon>
        <taxon>Euarchontoglires</taxon>
        <taxon>Glires</taxon>
        <taxon>Rodentia</taxon>
        <taxon>Myomorpha</taxon>
        <taxon>Muroidea</taxon>
        <taxon>Muridae</taxon>
        <taxon>Murinae</taxon>
        <taxon>Mus</taxon>
        <taxon>Mus</taxon>
    </lineage>
</organism>
<sequence>MKKFFPFRGKRKTDDSHSHSSEVPISLAKTAPPSLSIGGGYHLRDKHLKKLHKAATIGNEQKLKDYLERKKYNVNGRDKRSRTPLHLACANGYTNIVSLLIENQCKINVQDSENRTPLIKAVECQQESCATVLLLHGADPNLVDVYSNTALHYAVCGQNISLANKLLQYKANLEAKNKDGHTPLLLAVAENNENMVKFLLKKGADVNASDKNHRTAIMIALIVEPTSSVKLLLQQDTDLAHKDIYGFTAEEYASFNGFTMYHHITANNENKKKTEQTAY</sequence>